<accession>B1YRP4</accession>
<gene>
    <name evidence="1" type="primary">rplF</name>
    <name type="ordered locus">BamMC406_0291</name>
</gene>
<name>RL6_BURA4</name>
<reference key="1">
    <citation type="submission" date="2008-04" db="EMBL/GenBank/DDBJ databases">
        <title>Complete sequence of chromosome 1 of Burkholderia ambifaria MC40-6.</title>
        <authorList>
            <person name="Copeland A."/>
            <person name="Lucas S."/>
            <person name="Lapidus A."/>
            <person name="Glavina del Rio T."/>
            <person name="Dalin E."/>
            <person name="Tice H."/>
            <person name="Pitluck S."/>
            <person name="Chain P."/>
            <person name="Malfatti S."/>
            <person name="Shin M."/>
            <person name="Vergez L."/>
            <person name="Lang D."/>
            <person name="Schmutz J."/>
            <person name="Larimer F."/>
            <person name="Land M."/>
            <person name="Hauser L."/>
            <person name="Kyrpides N."/>
            <person name="Lykidis A."/>
            <person name="Ramette A."/>
            <person name="Konstantinidis K."/>
            <person name="Tiedje J."/>
            <person name="Richardson P."/>
        </authorList>
    </citation>
    <scope>NUCLEOTIDE SEQUENCE [LARGE SCALE GENOMIC DNA]</scope>
    <source>
        <strain>MC40-6</strain>
    </source>
</reference>
<comment type="function">
    <text evidence="1">This protein binds to the 23S rRNA, and is important in its secondary structure. It is located near the subunit interface in the base of the L7/L12 stalk, and near the tRNA binding site of the peptidyltransferase center.</text>
</comment>
<comment type="subunit">
    <text evidence="1">Part of the 50S ribosomal subunit.</text>
</comment>
<comment type="similarity">
    <text evidence="1">Belongs to the universal ribosomal protein uL6 family.</text>
</comment>
<feature type="chain" id="PRO_1000143951" description="Large ribosomal subunit protein uL6">
    <location>
        <begin position="1"/>
        <end position="176"/>
    </location>
</feature>
<evidence type="ECO:0000255" key="1">
    <source>
        <dbReference type="HAMAP-Rule" id="MF_01365"/>
    </source>
</evidence>
<evidence type="ECO:0000305" key="2"/>
<protein>
    <recommendedName>
        <fullName evidence="1">Large ribosomal subunit protein uL6</fullName>
    </recommendedName>
    <alternativeName>
        <fullName evidence="2">50S ribosomal protein L6</fullName>
    </alternativeName>
</protein>
<organism>
    <name type="scientific">Burkholderia ambifaria (strain MC40-6)</name>
    <dbReference type="NCBI Taxonomy" id="398577"/>
    <lineage>
        <taxon>Bacteria</taxon>
        <taxon>Pseudomonadati</taxon>
        <taxon>Pseudomonadota</taxon>
        <taxon>Betaproteobacteria</taxon>
        <taxon>Burkholderiales</taxon>
        <taxon>Burkholderiaceae</taxon>
        <taxon>Burkholderia</taxon>
        <taxon>Burkholderia cepacia complex</taxon>
    </lineage>
</organism>
<dbReference type="EMBL" id="CP001025">
    <property type="protein sequence ID" value="ACB62792.1"/>
    <property type="molecule type" value="Genomic_DNA"/>
</dbReference>
<dbReference type="RefSeq" id="WP_006758786.1">
    <property type="nucleotide sequence ID" value="NC_010551.1"/>
</dbReference>
<dbReference type="SMR" id="B1YRP4"/>
<dbReference type="GeneID" id="98107145"/>
<dbReference type="KEGG" id="bac:BamMC406_0291"/>
<dbReference type="HOGENOM" id="CLU_065464_1_2_4"/>
<dbReference type="OrthoDB" id="9805007at2"/>
<dbReference type="Proteomes" id="UP000001680">
    <property type="component" value="Chromosome 1"/>
</dbReference>
<dbReference type="GO" id="GO:0022625">
    <property type="term" value="C:cytosolic large ribosomal subunit"/>
    <property type="evidence" value="ECO:0007669"/>
    <property type="project" value="TreeGrafter"/>
</dbReference>
<dbReference type="GO" id="GO:0019843">
    <property type="term" value="F:rRNA binding"/>
    <property type="evidence" value="ECO:0007669"/>
    <property type="project" value="UniProtKB-UniRule"/>
</dbReference>
<dbReference type="GO" id="GO:0003735">
    <property type="term" value="F:structural constituent of ribosome"/>
    <property type="evidence" value="ECO:0007669"/>
    <property type="project" value="InterPro"/>
</dbReference>
<dbReference type="GO" id="GO:0002181">
    <property type="term" value="P:cytoplasmic translation"/>
    <property type="evidence" value="ECO:0007669"/>
    <property type="project" value="TreeGrafter"/>
</dbReference>
<dbReference type="FunFam" id="3.90.930.12:FF:000001">
    <property type="entry name" value="50S ribosomal protein L6"/>
    <property type="match status" value="1"/>
</dbReference>
<dbReference type="Gene3D" id="3.90.930.12">
    <property type="entry name" value="Ribosomal protein L6, alpha-beta domain"/>
    <property type="match status" value="2"/>
</dbReference>
<dbReference type="HAMAP" id="MF_01365_B">
    <property type="entry name" value="Ribosomal_uL6_B"/>
    <property type="match status" value="1"/>
</dbReference>
<dbReference type="InterPro" id="IPR000702">
    <property type="entry name" value="Ribosomal_uL6-like"/>
</dbReference>
<dbReference type="InterPro" id="IPR036789">
    <property type="entry name" value="Ribosomal_uL6-like_a/b-dom_sf"/>
</dbReference>
<dbReference type="InterPro" id="IPR020040">
    <property type="entry name" value="Ribosomal_uL6_a/b-dom"/>
</dbReference>
<dbReference type="InterPro" id="IPR019906">
    <property type="entry name" value="Ribosomal_uL6_bac-type"/>
</dbReference>
<dbReference type="InterPro" id="IPR002358">
    <property type="entry name" value="Ribosomal_uL6_CS"/>
</dbReference>
<dbReference type="NCBIfam" id="TIGR03654">
    <property type="entry name" value="L6_bact"/>
    <property type="match status" value="1"/>
</dbReference>
<dbReference type="PANTHER" id="PTHR11655">
    <property type="entry name" value="60S/50S RIBOSOMAL PROTEIN L6/L9"/>
    <property type="match status" value="1"/>
</dbReference>
<dbReference type="PANTHER" id="PTHR11655:SF14">
    <property type="entry name" value="LARGE RIBOSOMAL SUBUNIT PROTEIN UL6M"/>
    <property type="match status" value="1"/>
</dbReference>
<dbReference type="Pfam" id="PF00347">
    <property type="entry name" value="Ribosomal_L6"/>
    <property type="match status" value="2"/>
</dbReference>
<dbReference type="PIRSF" id="PIRSF002162">
    <property type="entry name" value="Ribosomal_L6"/>
    <property type="match status" value="1"/>
</dbReference>
<dbReference type="PRINTS" id="PR00059">
    <property type="entry name" value="RIBOSOMALL6"/>
</dbReference>
<dbReference type="SUPFAM" id="SSF56053">
    <property type="entry name" value="Ribosomal protein L6"/>
    <property type="match status" value="2"/>
</dbReference>
<dbReference type="PROSITE" id="PS00525">
    <property type="entry name" value="RIBOSOMAL_L6_1"/>
    <property type="match status" value="1"/>
</dbReference>
<keyword id="KW-0687">Ribonucleoprotein</keyword>
<keyword id="KW-0689">Ribosomal protein</keyword>
<keyword id="KW-0694">RNA-binding</keyword>
<keyword id="KW-0699">rRNA-binding</keyword>
<sequence length="176" mass="18705">MSRVGKSPIALQGAEVKLADGAITVKGPLGTITQAINPLVNVANNDGTLNLSPVDESREANALSGTMRAIIANAVHGVTKGFERKLTLVGVGYRAQAQGDKLNLSLGFSHPVVHQMPEGVKAETPTQTEIVIKGINKQQVGQVAAEVRGYRPPEPYKGKGVRYSDEVVILKETKKK</sequence>
<proteinExistence type="inferred from homology"/>